<protein>
    <recommendedName>
        <fullName evidence="1">Homoserine kinase</fullName>
        <shortName evidence="1">HK</shortName>
        <shortName evidence="1">HSK</shortName>
        <ecNumber evidence="1">2.7.1.39</ecNumber>
    </recommendedName>
</protein>
<keyword id="KW-0028">Amino-acid biosynthesis</keyword>
<keyword id="KW-0067">ATP-binding</keyword>
<keyword id="KW-0963">Cytoplasm</keyword>
<keyword id="KW-0418">Kinase</keyword>
<keyword id="KW-0547">Nucleotide-binding</keyword>
<keyword id="KW-0791">Threonine biosynthesis</keyword>
<keyword id="KW-0808">Transferase</keyword>
<sequence length="297" mass="32704">MVEVRVPATSANIGPGFDCLGVAVNIYNKFFVEEIEEGLIFEGCADKFKNENNLIYVAMKKCFDKIGYKPTGLRIKIESDIPVSRGLGSSAACVVGGIVSANELAGGVLNKKELLDLAVGVEGHPDNVNPAFCGGMTASISDNREVIYSKVKVSEGIKFCALIPDFTLSTEKARAVLPKSIDYKDGIFNVGRTALMISALNNGDFHLIKYACKDKLHQDYRAKLIENFYSIKEECEKLNSLGVFLSGAGPTIMVMLKEEDKRFSKNIKSFLETLKNKWEVRELKIDKLGTVVNNRKV</sequence>
<feature type="chain" id="PRO_1000134245" description="Homoserine kinase">
    <location>
        <begin position="1"/>
        <end position="297"/>
    </location>
</feature>
<feature type="binding site" evidence="1">
    <location>
        <begin position="82"/>
        <end position="92"/>
    </location>
    <ligand>
        <name>ATP</name>
        <dbReference type="ChEBI" id="CHEBI:30616"/>
    </ligand>
</feature>
<gene>
    <name evidence="1" type="primary">thrB</name>
    <name type="ordered locus">CLM_1880</name>
</gene>
<proteinExistence type="inferred from homology"/>
<reference key="1">
    <citation type="submission" date="2008-10" db="EMBL/GenBank/DDBJ databases">
        <title>Genome sequence of Clostridium botulinum A2 Kyoto.</title>
        <authorList>
            <person name="Shrivastava S."/>
            <person name="Brinkac L.M."/>
            <person name="Brown J.L."/>
            <person name="Bruce D."/>
            <person name="Detter C.C."/>
            <person name="Johnson E.A."/>
            <person name="Munk C.A."/>
            <person name="Smith L.A."/>
            <person name="Smith T.J."/>
            <person name="Sutton G."/>
            <person name="Brettin T.S."/>
        </authorList>
    </citation>
    <scope>NUCLEOTIDE SEQUENCE [LARGE SCALE GENOMIC DNA]</scope>
    <source>
        <strain>Kyoto / Type A2</strain>
    </source>
</reference>
<comment type="function">
    <text evidence="1">Catalyzes the ATP-dependent phosphorylation of L-homoserine to L-homoserine phosphate.</text>
</comment>
<comment type="catalytic activity">
    <reaction evidence="1">
        <text>L-homoserine + ATP = O-phospho-L-homoserine + ADP + H(+)</text>
        <dbReference type="Rhea" id="RHEA:13985"/>
        <dbReference type="ChEBI" id="CHEBI:15378"/>
        <dbReference type="ChEBI" id="CHEBI:30616"/>
        <dbReference type="ChEBI" id="CHEBI:57476"/>
        <dbReference type="ChEBI" id="CHEBI:57590"/>
        <dbReference type="ChEBI" id="CHEBI:456216"/>
        <dbReference type="EC" id="2.7.1.39"/>
    </reaction>
</comment>
<comment type="pathway">
    <text evidence="1">Amino-acid biosynthesis; L-threonine biosynthesis; L-threonine from L-aspartate: step 4/5.</text>
</comment>
<comment type="subcellular location">
    <subcellularLocation>
        <location evidence="1">Cytoplasm</location>
    </subcellularLocation>
</comment>
<comment type="similarity">
    <text evidence="1">Belongs to the GHMP kinase family. Homoserine kinase subfamily.</text>
</comment>
<organism>
    <name type="scientific">Clostridium botulinum (strain Kyoto / Type A2)</name>
    <dbReference type="NCBI Taxonomy" id="536232"/>
    <lineage>
        <taxon>Bacteria</taxon>
        <taxon>Bacillati</taxon>
        <taxon>Bacillota</taxon>
        <taxon>Clostridia</taxon>
        <taxon>Eubacteriales</taxon>
        <taxon>Clostridiaceae</taxon>
        <taxon>Clostridium</taxon>
    </lineage>
</organism>
<dbReference type="EC" id="2.7.1.39" evidence="1"/>
<dbReference type="EMBL" id="CP001581">
    <property type="protein sequence ID" value="ACO86693.1"/>
    <property type="molecule type" value="Genomic_DNA"/>
</dbReference>
<dbReference type="RefSeq" id="WP_012705461.1">
    <property type="nucleotide sequence ID" value="NC_012563.1"/>
</dbReference>
<dbReference type="SMR" id="C1FNA5"/>
<dbReference type="KEGG" id="cby:CLM_1880"/>
<dbReference type="eggNOG" id="COG0083">
    <property type="taxonomic scope" value="Bacteria"/>
</dbReference>
<dbReference type="HOGENOM" id="CLU_041243_0_2_9"/>
<dbReference type="UniPathway" id="UPA00050">
    <property type="reaction ID" value="UER00064"/>
</dbReference>
<dbReference type="Proteomes" id="UP000001374">
    <property type="component" value="Chromosome"/>
</dbReference>
<dbReference type="GO" id="GO:0005737">
    <property type="term" value="C:cytoplasm"/>
    <property type="evidence" value="ECO:0007669"/>
    <property type="project" value="UniProtKB-SubCell"/>
</dbReference>
<dbReference type="GO" id="GO:0005524">
    <property type="term" value="F:ATP binding"/>
    <property type="evidence" value="ECO:0007669"/>
    <property type="project" value="UniProtKB-UniRule"/>
</dbReference>
<dbReference type="GO" id="GO:0004413">
    <property type="term" value="F:homoserine kinase activity"/>
    <property type="evidence" value="ECO:0007669"/>
    <property type="project" value="UniProtKB-UniRule"/>
</dbReference>
<dbReference type="GO" id="GO:0009088">
    <property type="term" value="P:threonine biosynthetic process"/>
    <property type="evidence" value="ECO:0007669"/>
    <property type="project" value="UniProtKB-UniRule"/>
</dbReference>
<dbReference type="Gene3D" id="3.30.230.10">
    <property type="match status" value="1"/>
</dbReference>
<dbReference type="Gene3D" id="3.30.70.890">
    <property type="entry name" value="GHMP kinase, C-terminal domain"/>
    <property type="match status" value="1"/>
</dbReference>
<dbReference type="HAMAP" id="MF_00384">
    <property type="entry name" value="Homoser_kinase"/>
    <property type="match status" value="1"/>
</dbReference>
<dbReference type="InterPro" id="IPR013750">
    <property type="entry name" value="GHMP_kinase_C_dom"/>
</dbReference>
<dbReference type="InterPro" id="IPR036554">
    <property type="entry name" value="GHMP_kinase_C_sf"/>
</dbReference>
<dbReference type="InterPro" id="IPR006204">
    <property type="entry name" value="GHMP_kinase_N_dom"/>
</dbReference>
<dbReference type="InterPro" id="IPR006203">
    <property type="entry name" value="GHMP_knse_ATP-bd_CS"/>
</dbReference>
<dbReference type="InterPro" id="IPR000870">
    <property type="entry name" value="Homoserine_kinase"/>
</dbReference>
<dbReference type="InterPro" id="IPR020568">
    <property type="entry name" value="Ribosomal_Su5_D2-typ_SF"/>
</dbReference>
<dbReference type="InterPro" id="IPR014721">
    <property type="entry name" value="Ribsml_uS5_D2-typ_fold_subgr"/>
</dbReference>
<dbReference type="NCBIfam" id="NF002288">
    <property type="entry name" value="PRK01212.1-4"/>
    <property type="match status" value="1"/>
</dbReference>
<dbReference type="NCBIfam" id="TIGR00191">
    <property type="entry name" value="thrB"/>
    <property type="match status" value="1"/>
</dbReference>
<dbReference type="PANTHER" id="PTHR20861:SF1">
    <property type="entry name" value="HOMOSERINE KINASE"/>
    <property type="match status" value="1"/>
</dbReference>
<dbReference type="PANTHER" id="PTHR20861">
    <property type="entry name" value="HOMOSERINE/4-DIPHOSPHOCYTIDYL-2-C-METHYL-D-ERYTHRITOL KINASE"/>
    <property type="match status" value="1"/>
</dbReference>
<dbReference type="Pfam" id="PF08544">
    <property type="entry name" value="GHMP_kinases_C"/>
    <property type="match status" value="1"/>
</dbReference>
<dbReference type="Pfam" id="PF00288">
    <property type="entry name" value="GHMP_kinases_N"/>
    <property type="match status" value="1"/>
</dbReference>
<dbReference type="PIRSF" id="PIRSF000676">
    <property type="entry name" value="Homoser_kin"/>
    <property type="match status" value="1"/>
</dbReference>
<dbReference type="PRINTS" id="PR00958">
    <property type="entry name" value="HOMSERKINASE"/>
</dbReference>
<dbReference type="SUPFAM" id="SSF55060">
    <property type="entry name" value="GHMP Kinase, C-terminal domain"/>
    <property type="match status" value="1"/>
</dbReference>
<dbReference type="SUPFAM" id="SSF54211">
    <property type="entry name" value="Ribosomal protein S5 domain 2-like"/>
    <property type="match status" value="1"/>
</dbReference>
<dbReference type="PROSITE" id="PS00627">
    <property type="entry name" value="GHMP_KINASES_ATP"/>
    <property type="match status" value="1"/>
</dbReference>
<name>KHSE_CLOBJ</name>
<accession>C1FNA5</accession>
<evidence type="ECO:0000255" key="1">
    <source>
        <dbReference type="HAMAP-Rule" id="MF_00384"/>
    </source>
</evidence>